<gene>
    <name type="primary">rpl22</name>
    <name type="ordered locus">Poptr_cp062</name>
</gene>
<dbReference type="EMBL" id="EF489041">
    <property type="protein sequence ID" value="ABO36745.1"/>
    <property type="molecule type" value="Genomic_DNA"/>
</dbReference>
<dbReference type="RefSeq" id="YP_001109541.1">
    <property type="nucleotide sequence ID" value="NC_009143.1"/>
</dbReference>
<dbReference type="SMR" id="A4GYV0"/>
<dbReference type="FunCoup" id="A4GYV0">
    <property type="interactions" value="506"/>
</dbReference>
<dbReference type="STRING" id="3694.A4GYV0"/>
<dbReference type="GeneID" id="4929712"/>
<dbReference type="KEGG" id="pop:4929712"/>
<dbReference type="InParanoid" id="A4GYV0"/>
<dbReference type="OrthoDB" id="1840754at2759"/>
<dbReference type="Proteomes" id="UP000006729">
    <property type="component" value="Chloroplast"/>
</dbReference>
<dbReference type="ExpressionAtlas" id="A4GYV0">
    <property type="expression patterns" value="baseline and differential"/>
</dbReference>
<dbReference type="GO" id="GO:0009507">
    <property type="term" value="C:chloroplast"/>
    <property type="evidence" value="ECO:0007669"/>
    <property type="project" value="UniProtKB-SubCell"/>
</dbReference>
<dbReference type="GO" id="GO:0015934">
    <property type="term" value="C:large ribosomal subunit"/>
    <property type="evidence" value="ECO:0000318"/>
    <property type="project" value="GO_Central"/>
</dbReference>
<dbReference type="GO" id="GO:0019843">
    <property type="term" value="F:rRNA binding"/>
    <property type="evidence" value="ECO:0007669"/>
    <property type="project" value="UniProtKB-UniRule"/>
</dbReference>
<dbReference type="GO" id="GO:0003735">
    <property type="term" value="F:structural constituent of ribosome"/>
    <property type="evidence" value="ECO:0000318"/>
    <property type="project" value="GO_Central"/>
</dbReference>
<dbReference type="GO" id="GO:0006412">
    <property type="term" value="P:translation"/>
    <property type="evidence" value="ECO:0000318"/>
    <property type="project" value="GO_Central"/>
</dbReference>
<dbReference type="CDD" id="cd00336">
    <property type="entry name" value="Ribosomal_L22"/>
    <property type="match status" value="1"/>
</dbReference>
<dbReference type="FunFam" id="3.90.470.10:FF:000006">
    <property type="entry name" value="50S ribosomal protein L22, chloroplastic"/>
    <property type="match status" value="1"/>
</dbReference>
<dbReference type="Gene3D" id="3.90.470.10">
    <property type="entry name" value="Ribosomal protein L22/L17"/>
    <property type="match status" value="1"/>
</dbReference>
<dbReference type="HAMAP" id="MF_01331_B">
    <property type="entry name" value="Ribosomal_uL22_B"/>
    <property type="match status" value="1"/>
</dbReference>
<dbReference type="InterPro" id="IPR001063">
    <property type="entry name" value="Ribosomal_uL22"/>
</dbReference>
<dbReference type="InterPro" id="IPR005727">
    <property type="entry name" value="Ribosomal_uL22_bac/chlpt-type"/>
</dbReference>
<dbReference type="InterPro" id="IPR047867">
    <property type="entry name" value="Ribosomal_uL22_bac/org-type"/>
</dbReference>
<dbReference type="InterPro" id="IPR018260">
    <property type="entry name" value="Ribosomal_uL22_CS"/>
</dbReference>
<dbReference type="InterPro" id="IPR036394">
    <property type="entry name" value="Ribosomal_uL22_sf"/>
</dbReference>
<dbReference type="NCBIfam" id="TIGR01044">
    <property type="entry name" value="rplV_bact"/>
    <property type="match status" value="1"/>
</dbReference>
<dbReference type="PANTHER" id="PTHR13501">
    <property type="entry name" value="CHLOROPLAST 50S RIBOSOMAL PROTEIN L22-RELATED"/>
    <property type="match status" value="1"/>
</dbReference>
<dbReference type="PANTHER" id="PTHR13501:SF10">
    <property type="entry name" value="LARGE RIBOSOMAL SUBUNIT PROTEIN UL22M"/>
    <property type="match status" value="1"/>
</dbReference>
<dbReference type="Pfam" id="PF00237">
    <property type="entry name" value="Ribosomal_L22"/>
    <property type="match status" value="1"/>
</dbReference>
<dbReference type="SUPFAM" id="SSF54843">
    <property type="entry name" value="Ribosomal protein L22"/>
    <property type="match status" value="1"/>
</dbReference>
<dbReference type="PROSITE" id="PS00464">
    <property type="entry name" value="RIBOSOMAL_L22"/>
    <property type="match status" value="1"/>
</dbReference>
<protein>
    <recommendedName>
        <fullName evidence="2">Large ribosomal subunit protein uL22c</fullName>
    </recommendedName>
    <alternativeName>
        <fullName>50S ribosomal protein L22, chloroplastic</fullName>
    </alternativeName>
</protein>
<sequence>MIKKRKKNPYEASASGFYISMSAHKARRIIDQIRGRSYEETLMILELMPYRACYPIFKLVYSAAANASHNMGLNEASLVISKAEVNEGATMKKFKPRARGRSYLIKRQTCHISIVLEDISYEEYEEDFLRRI</sequence>
<organism>
    <name type="scientific">Populus trichocarpa</name>
    <name type="common">Western balsam poplar</name>
    <name type="synonym">Populus balsamifera subsp. trichocarpa</name>
    <dbReference type="NCBI Taxonomy" id="3694"/>
    <lineage>
        <taxon>Eukaryota</taxon>
        <taxon>Viridiplantae</taxon>
        <taxon>Streptophyta</taxon>
        <taxon>Embryophyta</taxon>
        <taxon>Tracheophyta</taxon>
        <taxon>Spermatophyta</taxon>
        <taxon>Magnoliopsida</taxon>
        <taxon>eudicotyledons</taxon>
        <taxon>Gunneridae</taxon>
        <taxon>Pentapetalae</taxon>
        <taxon>rosids</taxon>
        <taxon>fabids</taxon>
        <taxon>Malpighiales</taxon>
        <taxon>Salicaceae</taxon>
        <taxon>Saliceae</taxon>
        <taxon>Populus</taxon>
    </lineage>
</organism>
<evidence type="ECO:0000250" key="1"/>
<evidence type="ECO:0000305" key="2"/>
<name>RK22_POPTR</name>
<reference key="1">
    <citation type="journal article" date="2006" name="Science">
        <title>The genome of black cottonwood, Populus trichocarpa (Torr. &amp; Gray).</title>
        <authorList>
            <person name="Tuskan G.A."/>
            <person name="Difazio S."/>
            <person name="Jansson S."/>
            <person name="Bohlmann J."/>
            <person name="Grigoriev I."/>
            <person name="Hellsten U."/>
            <person name="Putnam N."/>
            <person name="Ralph S."/>
            <person name="Rombauts S."/>
            <person name="Salamov A."/>
            <person name="Schein J."/>
            <person name="Sterck L."/>
            <person name="Aerts A."/>
            <person name="Bhalerao R.R."/>
            <person name="Bhalerao R.P."/>
            <person name="Blaudez D."/>
            <person name="Boerjan W."/>
            <person name="Brun A."/>
            <person name="Brunner A."/>
            <person name="Busov V."/>
            <person name="Campbell M."/>
            <person name="Carlson J."/>
            <person name="Chalot M."/>
            <person name="Chapman J."/>
            <person name="Chen G.-L."/>
            <person name="Cooper D."/>
            <person name="Coutinho P.M."/>
            <person name="Couturier J."/>
            <person name="Covert S."/>
            <person name="Cronk Q."/>
            <person name="Cunningham R."/>
            <person name="Davis J."/>
            <person name="Degroeve S."/>
            <person name="Dejardin A."/>
            <person name="dePamphilis C.W."/>
            <person name="Detter J."/>
            <person name="Dirks B."/>
            <person name="Dubchak I."/>
            <person name="Duplessis S."/>
            <person name="Ehlting J."/>
            <person name="Ellis B."/>
            <person name="Gendler K."/>
            <person name="Goodstein D."/>
            <person name="Gribskov M."/>
            <person name="Grimwood J."/>
            <person name="Groover A."/>
            <person name="Gunter L."/>
            <person name="Hamberger B."/>
            <person name="Heinze B."/>
            <person name="Helariutta Y."/>
            <person name="Henrissat B."/>
            <person name="Holligan D."/>
            <person name="Holt R."/>
            <person name="Huang W."/>
            <person name="Islam-Faridi N."/>
            <person name="Jones S."/>
            <person name="Jones-Rhoades M."/>
            <person name="Jorgensen R."/>
            <person name="Joshi C."/>
            <person name="Kangasjaervi J."/>
            <person name="Karlsson J."/>
            <person name="Kelleher C."/>
            <person name="Kirkpatrick R."/>
            <person name="Kirst M."/>
            <person name="Kohler A."/>
            <person name="Kalluri U."/>
            <person name="Larimer F."/>
            <person name="Leebens-Mack J."/>
            <person name="Leple J.-C."/>
            <person name="Locascio P."/>
            <person name="Lou Y."/>
            <person name="Lucas S."/>
            <person name="Martin F."/>
            <person name="Montanini B."/>
            <person name="Napoli C."/>
            <person name="Nelson D.R."/>
            <person name="Nelson C."/>
            <person name="Nieminen K."/>
            <person name="Nilsson O."/>
            <person name="Pereda V."/>
            <person name="Peter G."/>
            <person name="Philippe R."/>
            <person name="Pilate G."/>
            <person name="Poliakov A."/>
            <person name="Razumovskaya J."/>
            <person name="Richardson P."/>
            <person name="Rinaldi C."/>
            <person name="Ritland K."/>
            <person name="Rouze P."/>
            <person name="Ryaboy D."/>
            <person name="Schmutz J."/>
            <person name="Schrader J."/>
            <person name="Segerman B."/>
            <person name="Shin H."/>
            <person name="Siddiqui A."/>
            <person name="Sterky F."/>
            <person name="Terry A."/>
            <person name="Tsai C.-J."/>
            <person name="Uberbacher E."/>
            <person name="Unneberg P."/>
            <person name="Vahala J."/>
            <person name="Wall K."/>
            <person name="Wessler S."/>
            <person name="Yang G."/>
            <person name="Yin T."/>
            <person name="Douglas C."/>
            <person name="Marra M."/>
            <person name="Sandberg G."/>
            <person name="Van de Peer Y."/>
            <person name="Rokhsar D.S."/>
        </authorList>
    </citation>
    <scope>NUCLEOTIDE SEQUENCE [LARGE SCALE GENOMIC DNA]</scope>
    <source>
        <strain>cv. Nisqually</strain>
    </source>
</reference>
<geneLocation type="chloroplast"/>
<feature type="chain" id="PRO_0000354592" description="Large ribosomal subunit protein uL22c">
    <location>
        <begin position="1"/>
        <end position="132"/>
    </location>
</feature>
<accession>A4GYV0</accession>
<keyword id="KW-0150">Chloroplast</keyword>
<keyword id="KW-0934">Plastid</keyword>
<keyword id="KW-1185">Reference proteome</keyword>
<keyword id="KW-0687">Ribonucleoprotein</keyword>
<keyword id="KW-0689">Ribosomal protein</keyword>
<keyword id="KW-0694">RNA-binding</keyword>
<keyword id="KW-0699">rRNA-binding</keyword>
<comment type="function">
    <text evidence="1">This protein binds specifically to 23S rRNA.</text>
</comment>
<comment type="function">
    <text evidence="1">The globular domain of the protein is located near the polypeptide exit tunnel on the outside of the subunit, while an extended beta-hairpin is found that lines the wall of the exit tunnel in the center of the 70S ribosome.</text>
</comment>
<comment type="subunit">
    <text evidence="1">Part of the 50S ribosomal subunit.</text>
</comment>
<comment type="subcellular location">
    <subcellularLocation>
        <location>Plastid</location>
        <location>Chloroplast</location>
    </subcellularLocation>
</comment>
<comment type="similarity">
    <text evidence="2">Belongs to the universal ribosomal protein uL22 family.</text>
</comment>
<proteinExistence type="inferred from homology"/>